<reference key="1">
    <citation type="journal article" date="2009" name="Genome Biol.">
        <title>A whole-genome assembly of the domestic cow, Bos taurus.</title>
        <authorList>
            <person name="Zimin A.V."/>
            <person name="Delcher A.L."/>
            <person name="Florea L."/>
            <person name="Kelley D.R."/>
            <person name="Schatz M.C."/>
            <person name="Puiu D."/>
            <person name="Hanrahan F."/>
            <person name="Pertea G."/>
            <person name="Van Tassell C.P."/>
            <person name="Sonstegard T.S."/>
            <person name="Marcais G."/>
            <person name="Roberts M."/>
            <person name="Subramanian P."/>
            <person name="Yorke J.A."/>
            <person name="Salzberg S.L."/>
        </authorList>
    </citation>
    <scope>NUCLEOTIDE SEQUENCE [LARGE SCALE GENOMIC DNA]</scope>
    <source>
        <strain>Hereford</strain>
    </source>
</reference>
<reference key="2">
    <citation type="journal article" date="1997" name="J. Biol. Chem.">
        <title>Isolation and molecular cloning of wortmannin-sensitive bovine type III phosphatidylinositol 4-kinases.</title>
        <authorList>
            <person name="Balla T."/>
            <person name="Downing G.J."/>
            <person name="Jaffe H."/>
            <person name="Kim S."/>
            <person name="Zolyomi A."/>
            <person name="Catt K.J."/>
        </authorList>
    </citation>
    <scope>NUCLEOTIDE SEQUENCE [MRNA] OF 49-2102</scope>
    <scope>ACTIVITY REGULATION</scope>
    <source>
        <tissue>Brain</tissue>
    </source>
</reference>
<reference key="3">
    <citation type="journal article" date="2012" name="J. Cell Biol.">
        <title>PtdIns4P synthesis by PI4KIIIalpha at the plasma membrane and its impact on plasma membrane identity.</title>
        <authorList>
            <person name="Nakatsu F."/>
            <person name="Baskin J.M."/>
            <person name="Chung J."/>
            <person name="Tanner L.B."/>
            <person name="Shui G."/>
            <person name="Lee S.Y."/>
            <person name="Pirruccello M."/>
            <person name="Hao M."/>
            <person name="Ingolia N.T."/>
            <person name="Wenk M.R."/>
            <person name="De Camilli P."/>
        </authorList>
    </citation>
    <scope>GENE STRUCTURE</scope>
</reference>
<protein>
    <recommendedName>
        <fullName>Phosphatidylinositol 4-kinase alpha</fullName>
        <shortName>PI4-kinase alpha</shortName>
        <shortName>PI4K-alpha</shortName>
        <shortName>PtdIns-4-kinase alpha</shortName>
        <ecNumber evidence="2">2.7.1.67</ecNumber>
    </recommendedName>
</protein>
<keyword id="KW-0067">ATP-binding</keyword>
<keyword id="KW-1003">Cell membrane</keyword>
<keyword id="KW-0963">Cytoplasm</keyword>
<keyword id="KW-0418">Kinase</keyword>
<keyword id="KW-0443">Lipid metabolism</keyword>
<keyword id="KW-0472">Membrane</keyword>
<keyword id="KW-0547">Nucleotide-binding</keyword>
<keyword id="KW-0597">Phosphoprotein</keyword>
<keyword id="KW-1185">Reference proteome</keyword>
<keyword id="KW-0808">Transferase</keyword>
<feature type="chain" id="PRO_0000226047" description="Phosphatidylinositol 4-kinase alpha">
    <location>
        <begin position="1"/>
        <end position="2102"/>
    </location>
</feature>
<feature type="domain" description="PIK helical" evidence="4">
    <location>
        <begin position="1530"/>
        <end position="1718"/>
    </location>
</feature>
<feature type="domain" description="PI3K/PI4K catalytic" evidence="3">
    <location>
        <begin position="1808"/>
        <end position="2086"/>
    </location>
</feature>
<feature type="region of interest" description="Disordered" evidence="5">
    <location>
        <begin position="257"/>
        <end position="276"/>
    </location>
</feature>
<feature type="region of interest" description="G-loop" evidence="3">
    <location>
        <begin position="1814"/>
        <end position="1820"/>
    </location>
</feature>
<feature type="region of interest" description="Catalytic loop" evidence="3">
    <location>
        <begin position="1954"/>
        <end position="1962"/>
    </location>
</feature>
<feature type="region of interest" description="Activation loop" evidence="3">
    <location>
        <begin position="1973"/>
        <end position="1997"/>
    </location>
</feature>
<feature type="modified residue" description="Phosphoserine" evidence="2">
    <location>
        <position position="230"/>
    </location>
</feature>
<feature type="modified residue" description="Phosphoserine" evidence="2">
    <location>
        <position position="256"/>
    </location>
</feature>
<feature type="modified residue" description="Phosphoserine" evidence="2">
    <location>
        <position position="257"/>
    </location>
</feature>
<feature type="modified residue" description="Phosphoserine" evidence="1">
    <location>
        <position position="259"/>
    </location>
</feature>
<feature type="modified residue" description="Phosphoserine" evidence="2">
    <location>
        <position position="260"/>
    </location>
</feature>
<feature type="modified residue" description="Phosphoserine" evidence="2">
    <location>
        <position position="265"/>
    </location>
</feature>
<feature type="modified residue" description="Phosphoserine" evidence="2">
    <location>
        <position position="429"/>
    </location>
</feature>
<feature type="modified residue" description="Phosphotyrosine" evidence="2">
    <location>
        <position position="1154"/>
    </location>
</feature>
<feature type="modified residue" description="Phosphoserine" evidence="2">
    <location>
        <position position="1436"/>
    </location>
</feature>
<feature type="sequence conflict" description="In Ref. 2; AAC48730." evidence="7" ref="2">
    <original>SL</original>
    <variation>CV</variation>
    <location>
        <begin position="49"/>
        <end position="50"/>
    </location>
</feature>
<feature type="sequence conflict" description="In Ref. 2; AAC48730." evidence="7" ref="2">
    <original>F</original>
    <variation>L</variation>
    <location>
        <position position="131"/>
    </location>
</feature>
<feature type="sequence conflict" description="In Ref. 2; AAC48730." evidence="7" ref="2">
    <original>I</original>
    <variation>L</variation>
    <location>
        <position position="204"/>
    </location>
</feature>
<feature type="sequence conflict" description="In Ref. 2; AAC48730." evidence="7" ref="2">
    <original>F</original>
    <variation>L</variation>
    <location>
        <position position="308"/>
    </location>
</feature>
<feature type="sequence conflict" description="In Ref. 2; AAC48730." evidence="7" ref="2">
    <original>Y</original>
    <variation>H</variation>
    <location>
        <position position="366"/>
    </location>
</feature>
<feature type="sequence conflict" description="In Ref. 2; AAC48730." evidence="7" ref="2">
    <original>HL</original>
    <variation>QV</variation>
    <location>
        <begin position="478"/>
        <end position="479"/>
    </location>
</feature>
<feature type="sequence conflict" description="In Ref. 2; AAC48730." evidence="7" ref="2">
    <original>V</original>
    <variation>E</variation>
    <location>
        <position position="583"/>
    </location>
</feature>
<feature type="sequence conflict" description="In Ref. 2; AAC48730." evidence="7" ref="2">
    <original>K</original>
    <variation>E</variation>
    <location>
        <position position="785"/>
    </location>
</feature>
<feature type="sequence conflict" description="In Ref. 2; AAC48730." evidence="7" ref="2">
    <original>F</original>
    <variation>L</variation>
    <location>
        <position position="917"/>
    </location>
</feature>
<feature type="sequence conflict" description="In Ref. 2; AAC48730." evidence="7" ref="2">
    <original>HA</original>
    <variation>T</variation>
    <location>
        <begin position="967"/>
        <end position="968"/>
    </location>
</feature>
<feature type="sequence conflict" description="In Ref. 2; AAC48730." evidence="7" ref="2">
    <original>A</original>
    <variation>S</variation>
    <location>
        <position position="1111"/>
    </location>
</feature>
<feature type="sequence conflict" description="In Ref. 2; AAC48730." evidence="7" ref="2">
    <original>G</original>
    <variation>A</variation>
    <location>
        <position position="1151"/>
    </location>
</feature>
<feature type="sequence conflict" description="In Ref. 2; AAC48730." evidence="7" ref="2">
    <original>Y</original>
    <variation>S</variation>
    <location>
        <position position="1628"/>
    </location>
</feature>
<accession>O02811</accession>
<accession>F1MLV0</accession>
<comment type="function">
    <text evidence="2">Acts on phosphatidylinositol (PtdIns) in the first committed step in the production of the second messenger inositol-1,4,5,-trisphosphate.</text>
</comment>
<comment type="catalytic activity">
    <reaction evidence="2">
        <text>a 1,2-diacyl-sn-glycero-3-phospho-(1D-myo-inositol) + ATP = a 1,2-diacyl-sn-glycero-3-phospho-(1D-myo-inositol 4-phosphate) + ADP + H(+)</text>
        <dbReference type="Rhea" id="RHEA:19877"/>
        <dbReference type="ChEBI" id="CHEBI:15378"/>
        <dbReference type="ChEBI" id="CHEBI:30616"/>
        <dbReference type="ChEBI" id="CHEBI:57880"/>
        <dbReference type="ChEBI" id="CHEBI:58178"/>
        <dbReference type="ChEBI" id="CHEBI:456216"/>
        <dbReference type="EC" id="2.7.1.67"/>
    </reaction>
</comment>
<comment type="activity regulation">
    <text evidence="2 6">Activated by Triton X-100, insensitive to inhibition by adenosine and inhibited by wortmannin. The PI4K complex acts as a regulator of phosphatidylinositol 4-phosphate (PtdIns(4)P) synthesis (By similarity). Interaction with TMEM150A regulates PtdIns(4)P synthesis (By similarity).</text>
</comment>
<comment type="subunit">
    <text evidence="2">Component of a phosphatidylinositol 4-kinase (PI4K) complex, composed of PI4KA, EFR3 (EFR3A or EFR3B), TTC7 (TTC7A or TTC7B) and HYCC (HYCC1 or HYCC2). Interacts with TMEM150A; regulating recruitment to the plasma membrane. Interacts with TTC7A.</text>
</comment>
<comment type="subcellular location">
    <subcellularLocation>
        <location evidence="2">Cytoplasm</location>
    </subcellularLocation>
    <subcellularLocation>
        <location evidence="2">Cell membrane</location>
    </subcellularLocation>
    <text evidence="2">Localization to the plasma membrane is mediated by the PI4K complex and association with EFR3 (EFR3A or EFR3B), TTC7 (TTC7A or TTC7B) and HYCC (HYCC1 or HYCC2). Localization to the plasma membrane is regulated by TMEM150A.</text>
</comment>
<comment type="similarity">
    <text evidence="7">Belongs to the PI3/PI4-kinase family. Type III PI4K subfamily.</text>
</comment>
<organism>
    <name type="scientific">Bos taurus</name>
    <name type="common">Bovine</name>
    <dbReference type="NCBI Taxonomy" id="9913"/>
    <lineage>
        <taxon>Eukaryota</taxon>
        <taxon>Metazoa</taxon>
        <taxon>Chordata</taxon>
        <taxon>Craniata</taxon>
        <taxon>Vertebrata</taxon>
        <taxon>Euteleostomi</taxon>
        <taxon>Mammalia</taxon>
        <taxon>Eutheria</taxon>
        <taxon>Laurasiatheria</taxon>
        <taxon>Artiodactyla</taxon>
        <taxon>Ruminantia</taxon>
        <taxon>Pecora</taxon>
        <taxon>Bovidae</taxon>
        <taxon>Bovinae</taxon>
        <taxon>Bos</taxon>
    </lineage>
</organism>
<dbReference type="EC" id="2.7.1.67" evidence="2"/>
<dbReference type="EMBL" id="U88532">
    <property type="protein sequence ID" value="AAC48730.1"/>
    <property type="molecule type" value="mRNA"/>
</dbReference>
<dbReference type="EMBL" id="DAAA02045733">
    <property type="status" value="NOT_ANNOTATED_CDS"/>
    <property type="molecule type" value="Genomic_DNA"/>
</dbReference>
<dbReference type="RefSeq" id="NP_777002.1">
    <property type="nucleotide sequence ID" value="NM_174577.2"/>
</dbReference>
<dbReference type="SMR" id="O02811"/>
<dbReference type="FunCoup" id="O02811">
    <property type="interactions" value="3420"/>
</dbReference>
<dbReference type="STRING" id="9913.ENSBTAP00000018572"/>
<dbReference type="ChEMBL" id="CHEMBL3185"/>
<dbReference type="PaxDb" id="9913-ENSBTAP00000018572"/>
<dbReference type="GeneID" id="282309"/>
<dbReference type="KEGG" id="bta:282309"/>
<dbReference type="CTD" id="5297"/>
<dbReference type="eggNOG" id="KOG0902">
    <property type="taxonomic scope" value="Eukaryota"/>
</dbReference>
<dbReference type="InParanoid" id="O02811"/>
<dbReference type="OMA" id="MSQRDEN"/>
<dbReference type="OrthoDB" id="10264149at2759"/>
<dbReference type="TreeFam" id="TF102041"/>
<dbReference type="Proteomes" id="UP000009136">
    <property type="component" value="Unplaced"/>
</dbReference>
<dbReference type="GO" id="GO:0005737">
    <property type="term" value="C:cytoplasm"/>
    <property type="evidence" value="ECO:0000250"/>
    <property type="project" value="UniProtKB"/>
</dbReference>
<dbReference type="GO" id="GO:0030660">
    <property type="term" value="C:Golgi-associated vesicle membrane"/>
    <property type="evidence" value="ECO:0000250"/>
    <property type="project" value="UniProtKB"/>
</dbReference>
<dbReference type="GO" id="GO:0005886">
    <property type="term" value="C:plasma membrane"/>
    <property type="evidence" value="ECO:0000250"/>
    <property type="project" value="UniProtKB"/>
</dbReference>
<dbReference type="GO" id="GO:0004430">
    <property type="term" value="F:1-phosphatidylinositol 4-kinase activity"/>
    <property type="evidence" value="ECO:0000250"/>
    <property type="project" value="UniProtKB"/>
</dbReference>
<dbReference type="GO" id="GO:0005524">
    <property type="term" value="F:ATP binding"/>
    <property type="evidence" value="ECO:0007669"/>
    <property type="project" value="UniProtKB-KW"/>
</dbReference>
<dbReference type="GO" id="GO:0046854">
    <property type="term" value="P:phosphatidylinositol phosphate biosynthetic process"/>
    <property type="evidence" value="ECO:0000250"/>
    <property type="project" value="UniProtKB"/>
</dbReference>
<dbReference type="GO" id="GO:0048015">
    <property type="term" value="P:phosphatidylinositol-mediated signaling"/>
    <property type="evidence" value="ECO:0000318"/>
    <property type="project" value="GO_Central"/>
</dbReference>
<dbReference type="CDD" id="cd00871">
    <property type="entry name" value="PI4Ka"/>
    <property type="match status" value="1"/>
</dbReference>
<dbReference type="CDD" id="cd05167">
    <property type="entry name" value="PI4Kc_III_alpha"/>
    <property type="match status" value="1"/>
</dbReference>
<dbReference type="FunFam" id="1.10.1070.11:FF:000005">
    <property type="entry name" value="Phosphatidylinositol 4-kinase, catalytic, alpha"/>
    <property type="match status" value="1"/>
</dbReference>
<dbReference type="FunFam" id="1.25.40.70:FF:000002">
    <property type="entry name" value="Phosphatidylinositol 4-kinase, catalytic, alpha"/>
    <property type="match status" value="1"/>
</dbReference>
<dbReference type="FunFam" id="3.30.1010.10:FF:000009">
    <property type="entry name" value="Phosphatidylinositol 4-kinase, catalytic, alpha"/>
    <property type="match status" value="1"/>
</dbReference>
<dbReference type="Gene3D" id="1.10.1070.11">
    <property type="entry name" value="Phosphatidylinositol 3-/4-kinase, catalytic domain"/>
    <property type="match status" value="1"/>
</dbReference>
<dbReference type="Gene3D" id="3.30.1010.10">
    <property type="entry name" value="Phosphatidylinositol 3-kinase Catalytic Subunit, Chain A, domain 4"/>
    <property type="match status" value="1"/>
</dbReference>
<dbReference type="Gene3D" id="1.25.40.70">
    <property type="entry name" value="Phosphatidylinositol 3-kinase, accessory domain (PIK)"/>
    <property type="match status" value="1"/>
</dbReference>
<dbReference type="InterPro" id="IPR016024">
    <property type="entry name" value="ARM-type_fold"/>
</dbReference>
<dbReference type="InterPro" id="IPR011009">
    <property type="entry name" value="Kinase-like_dom_sf"/>
</dbReference>
<dbReference type="InterPro" id="IPR000403">
    <property type="entry name" value="PI3/4_kinase_cat_dom"/>
</dbReference>
<dbReference type="InterPro" id="IPR036940">
    <property type="entry name" value="PI3/4_kinase_cat_sf"/>
</dbReference>
<dbReference type="InterPro" id="IPR018936">
    <property type="entry name" value="PI3/4_kinase_CS"/>
</dbReference>
<dbReference type="InterPro" id="IPR001263">
    <property type="entry name" value="PI3K_accessory_dom"/>
</dbReference>
<dbReference type="InterPro" id="IPR042236">
    <property type="entry name" value="PI3K_accessory_sf"/>
</dbReference>
<dbReference type="InterPro" id="IPR045495">
    <property type="entry name" value="PI4K_N"/>
</dbReference>
<dbReference type="InterPro" id="IPR015433">
    <property type="entry name" value="PI_Kinase"/>
</dbReference>
<dbReference type="PANTHER" id="PTHR10048:SF15">
    <property type="entry name" value="PHOSPHATIDYLINOSITOL 4-KINASE ALPHA"/>
    <property type="match status" value="1"/>
</dbReference>
<dbReference type="PANTHER" id="PTHR10048">
    <property type="entry name" value="PHOSPHATIDYLINOSITOL KINASE"/>
    <property type="match status" value="1"/>
</dbReference>
<dbReference type="Pfam" id="PF00454">
    <property type="entry name" value="PI3_PI4_kinase"/>
    <property type="match status" value="1"/>
</dbReference>
<dbReference type="Pfam" id="PF00613">
    <property type="entry name" value="PI3Ka"/>
    <property type="match status" value="1"/>
</dbReference>
<dbReference type="Pfam" id="PF19274">
    <property type="entry name" value="PI4K_N"/>
    <property type="match status" value="2"/>
</dbReference>
<dbReference type="SMART" id="SM00145">
    <property type="entry name" value="PI3Ka"/>
    <property type="match status" value="1"/>
</dbReference>
<dbReference type="SMART" id="SM00146">
    <property type="entry name" value="PI3Kc"/>
    <property type="match status" value="1"/>
</dbReference>
<dbReference type="SUPFAM" id="SSF48371">
    <property type="entry name" value="ARM repeat"/>
    <property type="match status" value="2"/>
</dbReference>
<dbReference type="SUPFAM" id="SSF56112">
    <property type="entry name" value="Protein kinase-like (PK-like)"/>
    <property type="match status" value="1"/>
</dbReference>
<dbReference type="PROSITE" id="PS00915">
    <property type="entry name" value="PI3_4_KINASE_1"/>
    <property type="match status" value="1"/>
</dbReference>
<dbReference type="PROSITE" id="PS00916">
    <property type="entry name" value="PI3_4_KINASE_2"/>
    <property type="match status" value="1"/>
</dbReference>
<dbReference type="PROSITE" id="PS50290">
    <property type="entry name" value="PI3_4_KINASE_3"/>
    <property type="match status" value="1"/>
</dbReference>
<dbReference type="PROSITE" id="PS51545">
    <property type="entry name" value="PIK_HELICAL"/>
    <property type="match status" value="1"/>
</dbReference>
<evidence type="ECO:0000250" key="1">
    <source>
        <dbReference type="UniProtKB" id="E9Q3L2"/>
    </source>
</evidence>
<evidence type="ECO:0000250" key="2">
    <source>
        <dbReference type="UniProtKB" id="P42356"/>
    </source>
</evidence>
<evidence type="ECO:0000255" key="3">
    <source>
        <dbReference type="PROSITE-ProRule" id="PRU00269"/>
    </source>
</evidence>
<evidence type="ECO:0000255" key="4">
    <source>
        <dbReference type="PROSITE-ProRule" id="PRU00878"/>
    </source>
</evidence>
<evidence type="ECO:0000256" key="5">
    <source>
        <dbReference type="SAM" id="MobiDB-lite"/>
    </source>
</evidence>
<evidence type="ECO:0000269" key="6">
    <source>
    </source>
</evidence>
<evidence type="ECO:0000305" key="7"/>
<proteinExistence type="evidence at transcript level"/>
<name>PI4KA_BOVIN</name>
<sequence>MAAAAARGGGGGGGGGSFGSGAGGGASRGFYFNTVLSLARSLAVQRPASLEKVQKLLCMCPVDFHGIFQLDERRRDAVIALGIFLIESDLQHKDSVVPYLLRLLKGLPKVYWVEESTARKGRGTLPVAESFSFCLVTLLSDVAYRDPSLRGEILEALLQVLHVLLGMCQALEIQEKEYLCKHAVPCLLGIVRAFGRHSSSEDSILSRLFPRAPAHSPRVPEELEGVRRRSFNDFRSILPSSLLTVCQEGSLKRKASSASSVAQVSPERGAPPPSPPGGSAFHCLEASYSPNGSTSESDYYFSAVSSSFSVSPLFNGVTYKEFSIPLEMLRELLNLVKKIVEEPVLKSLDAVVTGVIEASPSADLCYGAFSDPLYVAVLRMLRDTLYYMRDLPTSFVKEVHDFVLEQFNSSQGELQKILHDADRAHSELSPLKLRCQASAACVDLMVWAVKDEQGAENLCVKLSEKLQSKTSSKVIIAHLPLLICCLQGLGRLCERFPVVVHSVTPSLRDFLVVPSPVLVKLYKCHSQYHTVAGNDIKISVTNEHAESTLNVASGKKSQPSMYEQLRDIAIDNVCRCLKAGLTVDPVIVEAFLASLSNRLYISQESDKDAHLIPDHTIRALGHIAVALRDTPKVMEPILQILQQKFCQPPSPLDVLIIDQLGCLVITGNQYIYQEVWNLFQQISVKASSVVYSATKDYKDHGYRHCSLAVINALANIAANIQDEHLVDELLMNLLELFVQLGLEGKRASERASEKGPALKASSSAGNLGVLIPVIAVLTRRLPPIKEPKPRLQKLFRDFWLYSVLMGFAVEGSGLWPEEWYEGVCEIATKSPLLTFPSKEPLRSVLQYNSAMKNDTVTPAELSELRSTIVNLLDPAPEVSALIGKLDFAMSTYLLSVYRLEYMRVLRSSDPARFQVMFCYFEDKAIQKDKSGMMQCVIAVADKVFDAFLNMMAEKAKTKENEEELERHAQFLLVSFNHVHKRIRRVADKYLSGLVDKFPHLLWSGTVLKTMLDILQTLSLSLSADIHKDQPYYDIPDVPYRITVPDTYEARESIVKDFAARCGMILQEAMKWAPTVTKSHLQEYLSKHQNWVSGLSQHTGLAMATESVLHYAGYNKQSTSLGATQLTERPACVKKDYSNFMASLNLRNRYAGEVYGMIRFSDATGHTSDLNKMMVQELKAALGAGDAQQYTQAMFKLTAMLISSRDCDPQLLHHLCWGPLQMFNEHGMETALACWEWLLAGKNGVEVPFMREMAGAWQMTVEQKFGLFSAEMKEADPLAASEASQPKPCAPEVTPHYIWIDFLVQRFEIAKYCSSDQVEIFCSLLQRSLSLSIGGTAGSMNRHVAAIGPRFKLLTLGLSLLHADVLPNATIRNVLREKIYSTAFDYFSCPPRFPTQGEKRLREDISVMIKFWTAMFSDKKYLTASQLVPPDNQDTRSNLDIAVGSRQQATQGWINTYPLSSGMSTISKKSGMSKKTNRGSQLHKYYMKRRTLLLSLLATEIERLITWYNPLSAPELELDQAGESSVANWRSKYISLSEKQWKDNVNLAWSISPHLAVQLPARFKNTEAIGNEVTRLVRLDPGAVSDVPEAIKFLVTWHTIDADAPELSHVLCWAPADPPTGLSYFSSMYPPHPLTAQYGVKVLRSFPPDAILFYIPQIVQALRYDKMGYVREYILWAASQSQLLAHQFIWNMKTNIYVDEEGHQKDPDIGDLLEQLVEEITGSLSGPAKDFYQREFDFFNKITNVSAIIKPYPKGDERKKACLSALSEVKVQPGCYLPSNPEAIVLDIDYKSGTPMQSAAKAPYLAKFKVKRCGVSELEKEGLRCRSDPEEEGSMQEADGQKISWQAAIFKVGDDCRQDMLALQIIDLFKNIFQLVGLDLFVFPYRVVATAPGCGVIECIPDCTSRDQLGRQTDFGMYDYFTRQYGDESTLAFQQARYNFIRSMAAYSLLLFLLQIKDRHNGNIMLDKKGHLIHIDFGFMFESSPGGNLGWEPDIKLTDEMVMIMGGKMEATPFKWFMEMCVRGYLAVRPYMDAVVSLVTLMLDTGLPCFRGQTIKLLKHRFSPNMTEREAANFILKVIQNCFLSNRSRTYDMIQYYQNDIPY</sequence>
<gene>
    <name type="primary">PI4KA</name>
    <name type="synonym">PIK4CA</name>
</gene>